<proteinExistence type="evidence at transcript level"/>
<gene>
    <name evidence="4" type="primary">Shld2</name>
    <name evidence="4" type="synonym">Fam35a</name>
    <name evidence="1" type="synonym">Rinn2</name>
</gene>
<dbReference type="EMBL" id="AK149442">
    <property type="protein sequence ID" value="BAE28879.1"/>
    <property type="molecule type" value="mRNA"/>
</dbReference>
<dbReference type="EMBL" id="AC154738">
    <property type="status" value="NOT_ANNOTATED_CDS"/>
    <property type="molecule type" value="Genomic_DNA"/>
</dbReference>
<dbReference type="EMBL" id="AC160930">
    <property type="status" value="NOT_ANNOTATED_CDS"/>
    <property type="molecule type" value="Genomic_DNA"/>
</dbReference>
<dbReference type="CCDS" id="CCDS36874.1"/>
<dbReference type="RefSeq" id="NP_001347003.1">
    <property type="nucleotide sequence ID" value="NM_001360074.1"/>
</dbReference>
<dbReference type="RefSeq" id="NP_083665.2">
    <property type="nucleotide sequence ID" value="NM_029389.3"/>
</dbReference>
<dbReference type="RefSeq" id="XP_006519708.1">
    <property type="nucleotide sequence ID" value="XM_006519645.5"/>
</dbReference>
<dbReference type="RefSeq" id="XP_006519709.1">
    <property type="nucleotide sequence ID" value="XM_006519646.5"/>
</dbReference>
<dbReference type="RefSeq" id="XP_006519710.1">
    <property type="nucleotide sequence ID" value="XM_006519647.3"/>
</dbReference>
<dbReference type="RefSeq" id="XP_006519711.1">
    <property type="nucleotide sequence ID" value="XM_006519648.5"/>
</dbReference>
<dbReference type="RefSeq" id="XP_011243518.1">
    <property type="nucleotide sequence ID" value="XM_011245216.4"/>
</dbReference>
<dbReference type="BioGRID" id="217680">
    <property type="interactions" value="1"/>
</dbReference>
<dbReference type="ComplexPortal" id="CPX-3483">
    <property type="entry name" value="Shieldin complex"/>
</dbReference>
<dbReference type="FunCoup" id="Q3UEN2">
    <property type="interactions" value="1394"/>
</dbReference>
<dbReference type="STRING" id="10090.ENSMUSP00000107548"/>
<dbReference type="GlyGen" id="Q3UEN2">
    <property type="glycosylation" value="1 site, 1 O-linked glycan (1 site)"/>
</dbReference>
<dbReference type="iPTMnet" id="Q3UEN2"/>
<dbReference type="PhosphoSitePlus" id="Q3UEN2"/>
<dbReference type="PaxDb" id="10090-ENSMUSP00000107548"/>
<dbReference type="ProteomicsDB" id="271541"/>
<dbReference type="Antibodypedia" id="45608">
    <property type="antibodies" value="70 antibodies from 18 providers"/>
</dbReference>
<dbReference type="DNASU" id="75698"/>
<dbReference type="Ensembl" id="ENSMUST00000111917.3">
    <property type="protein sequence ID" value="ENSMUSP00000107548.2"/>
    <property type="gene ID" value="ENSMUSG00000041471.10"/>
</dbReference>
<dbReference type="GeneID" id="75698"/>
<dbReference type="KEGG" id="mmu:75698"/>
<dbReference type="UCSC" id="uc007tap.1">
    <property type="organism name" value="mouse"/>
</dbReference>
<dbReference type="AGR" id="MGI:1922948"/>
<dbReference type="CTD" id="54537"/>
<dbReference type="MGI" id="MGI:1922948">
    <property type="gene designation" value="Shld2"/>
</dbReference>
<dbReference type="VEuPathDB" id="HostDB:ENSMUSG00000041471"/>
<dbReference type="eggNOG" id="ENOG502QW94">
    <property type="taxonomic scope" value="Eukaryota"/>
</dbReference>
<dbReference type="GeneTree" id="ENSGT00390000003133"/>
<dbReference type="HOGENOM" id="CLU_016120_0_0_1"/>
<dbReference type="InParanoid" id="Q3UEN2"/>
<dbReference type="OMA" id="LKLHTMP"/>
<dbReference type="OrthoDB" id="5963585at2759"/>
<dbReference type="PhylomeDB" id="Q3UEN2"/>
<dbReference type="TreeFam" id="TF332107"/>
<dbReference type="BioGRID-ORCS" id="75698">
    <property type="hits" value="2 hits in 78 CRISPR screens"/>
</dbReference>
<dbReference type="ChiTaRS" id="Shld2">
    <property type="organism name" value="mouse"/>
</dbReference>
<dbReference type="PRO" id="PR:Q3UEN2"/>
<dbReference type="Proteomes" id="UP000000589">
    <property type="component" value="Chromosome 14"/>
</dbReference>
<dbReference type="RNAct" id="Q3UEN2">
    <property type="molecule type" value="protein"/>
</dbReference>
<dbReference type="Bgee" id="ENSMUSG00000041471">
    <property type="expression patterns" value="Expressed in animal zygote and 154 other cell types or tissues"/>
</dbReference>
<dbReference type="ExpressionAtlas" id="Q3UEN2">
    <property type="expression patterns" value="baseline and differential"/>
</dbReference>
<dbReference type="GO" id="GO:0015629">
    <property type="term" value="C:actin cytoskeleton"/>
    <property type="evidence" value="ECO:0007669"/>
    <property type="project" value="Ensembl"/>
</dbReference>
<dbReference type="GO" id="GO:0000785">
    <property type="term" value="C:chromatin"/>
    <property type="evidence" value="ECO:0000303"/>
    <property type="project" value="ComplexPortal"/>
</dbReference>
<dbReference type="GO" id="GO:0005654">
    <property type="term" value="C:nucleoplasm"/>
    <property type="evidence" value="ECO:0007669"/>
    <property type="project" value="Ensembl"/>
</dbReference>
<dbReference type="GO" id="GO:0035861">
    <property type="term" value="C:site of double-strand break"/>
    <property type="evidence" value="ECO:0000303"/>
    <property type="project" value="ComplexPortal"/>
</dbReference>
<dbReference type="GO" id="GO:0006281">
    <property type="term" value="P:DNA repair"/>
    <property type="evidence" value="ECO:0007669"/>
    <property type="project" value="UniProtKB-KW"/>
</dbReference>
<dbReference type="GO" id="GO:2000042">
    <property type="term" value="P:negative regulation of double-strand break repair via homologous recombination"/>
    <property type="evidence" value="ECO:0007669"/>
    <property type="project" value="Ensembl"/>
</dbReference>
<dbReference type="GO" id="GO:2001034">
    <property type="term" value="P:positive regulation of double-strand break repair via nonhomologous end joining"/>
    <property type="evidence" value="ECO:0000303"/>
    <property type="project" value="ComplexPortal"/>
</dbReference>
<dbReference type="GO" id="GO:0045830">
    <property type="term" value="P:positive regulation of isotype switching"/>
    <property type="evidence" value="ECO:0007669"/>
    <property type="project" value="Ensembl"/>
</dbReference>
<dbReference type="GO" id="GO:0002208">
    <property type="term" value="P:somatic diversification of immunoglobulins involved in immune response"/>
    <property type="evidence" value="ECO:0000303"/>
    <property type="project" value="ComplexPortal"/>
</dbReference>
<dbReference type="GO" id="GO:0043247">
    <property type="term" value="P:telomere maintenance in response to DNA damage"/>
    <property type="evidence" value="ECO:0000303"/>
    <property type="project" value="ComplexPortal"/>
</dbReference>
<dbReference type="InterPro" id="IPR029715">
    <property type="entry name" value="FAM35A"/>
</dbReference>
<dbReference type="InterPro" id="IPR031589">
    <property type="entry name" value="SHLD2_C"/>
</dbReference>
<dbReference type="InterPro" id="IPR049507">
    <property type="entry name" value="SHLD2_OB1"/>
</dbReference>
<dbReference type="InterPro" id="IPR053944">
    <property type="entry name" value="SHLD2_OB2"/>
</dbReference>
<dbReference type="PANTHER" id="PTHR14495">
    <property type="entry name" value="SHIELDIN COMPLEX SUBUNIT 2"/>
    <property type="match status" value="1"/>
</dbReference>
<dbReference type="PANTHER" id="PTHR14495:SF2">
    <property type="entry name" value="SHIELDIN COMPLEX SUBUNIT 2"/>
    <property type="match status" value="1"/>
</dbReference>
<dbReference type="Pfam" id="PF22779">
    <property type="entry name" value="OB_SHLD2_2nd"/>
    <property type="match status" value="1"/>
</dbReference>
<dbReference type="Pfam" id="PF15793">
    <property type="entry name" value="SHLD2_C"/>
    <property type="match status" value="1"/>
</dbReference>
<dbReference type="Pfam" id="PF21669">
    <property type="entry name" value="SHLD2_OB1"/>
    <property type="match status" value="1"/>
</dbReference>
<feature type="chain" id="PRO_0000087162" description="Shieldin complex subunit 2">
    <location>
        <begin position="1"/>
        <end position="891"/>
    </location>
</feature>
<feature type="region of interest" description="Interaction with ASTE1" evidence="1">
    <location>
        <begin position="1"/>
        <end position="542"/>
    </location>
</feature>
<feature type="region of interest" description="Sufficient for interaction with SHLD3 and MAD2L2" evidence="1">
    <location>
        <begin position="1"/>
        <end position="61"/>
    </location>
</feature>
<feature type="region of interest" description="Disordered" evidence="2">
    <location>
        <begin position="184"/>
        <end position="222"/>
    </location>
</feature>
<feature type="region of interest" description="Disordered" evidence="2">
    <location>
        <begin position="260"/>
        <end position="294"/>
    </location>
</feature>
<feature type="region of interest" description="Disordered" evidence="2">
    <location>
        <begin position="333"/>
        <end position="357"/>
    </location>
</feature>
<feature type="region of interest" description="Mediates interaction with SHLD1" evidence="1">
    <location>
        <begin position="695"/>
        <end position="866"/>
    </location>
</feature>
<feature type="compositionally biased region" description="Basic and acidic residues" evidence="2">
    <location>
        <begin position="192"/>
        <end position="222"/>
    </location>
</feature>
<feature type="compositionally biased region" description="Polar residues" evidence="2">
    <location>
        <begin position="260"/>
        <end position="271"/>
    </location>
</feature>
<feature type="compositionally biased region" description="Polar residues" evidence="2">
    <location>
        <begin position="342"/>
        <end position="354"/>
    </location>
</feature>
<feature type="sequence conflict" description="In Ref. 1; BAE28879." evidence="3" ref="1">
    <original>E</original>
    <variation>GVMKQSVF</variation>
    <location>
        <position position="891"/>
    </location>
</feature>
<sequence length="891" mass="99090">MSQGSQVHIFLGAPVAPLKTTVSQGTASLMSTANAWEKVRLFYKQHSLYLKAGDQEFKNLEDCQVPKGLGPPGLLSGDVLTTSVRRSAQVDEDFKHSASEAQSVKSQVNLSDMTSGQMCGLGDGVQHLPEEEKDQKLQCKNKKITDEQSKNQSDPCVRNFQRDLFALDLKCAAKLDLGCCTEQMSTGTKPEPTGHRERQSQESFSDTRCEPQSEGAVRKASDQRLSAEAEFLSVLTSSQRAFLAQGNDKGQDCINKSTVNMEAEPTGSQGVRRTEGDFSKPGGDFEEESENEQSQVYSLELFSPVCPESESSHSHINPGKNLENTSSQELFSNEENLPPNELCSSHPSTANRSWSCKDDSHHSKALSEVHQVSKKPRMDSNIREAAKAVPQRVMSELKDSKKISLIKNCDSKNQKYNCLVMVLTPCHVKEITIKSGPNSGSKVPLATIVVIDQSEIKKRVVLWRTAAFGALTVFLGDIILLTDVVLYEDQWIGETVLQSTFTSQLLNLGSYSYVQPEKYSNVIANVILQDLLTYVSTKHSYLKDLPQRQPQKMNTVEFVELEQLQPDILVHAVLRVVDVTVLTEALYSYRGQKQRKVVLTVEQAQGQHYVLVLWGPGAAWYTQLQRKKDSIWEFKYLFVQRNSILENLELHTTLWSSCECLFDDDTRAISFKTKFQKNTSSFVKISDLATHLEDKYSGVVLIKAKVSELVFSAAAAQKIALNARSTLQSIFSSLPSIVYAGCAHCGSELETDENRIYRQCLSCLPFVGKKIFYRPALMTIVDGRYNTCVHVGSKMMEQILLNISPDCLNRVIVPSSEVTYGMVASDLLHSLLAVSAEPCVLKIQSLFELDENSYPLQQDFSLLDFCPDSRKLWSPGLSLRAEGTGGIPGKE</sequence>
<reference key="1">
    <citation type="journal article" date="2005" name="Science">
        <title>The transcriptional landscape of the mammalian genome.</title>
        <authorList>
            <person name="Carninci P."/>
            <person name="Kasukawa T."/>
            <person name="Katayama S."/>
            <person name="Gough J."/>
            <person name="Frith M.C."/>
            <person name="Maeda N."/>
            <person name="Oyama R."/>
            <person name="Ravasi T."/>
            <person name="Lenhard B."/>
            <person name="Wells C."/>
            <person name="Kodzius R."/>
            <person name="Shimokawa K."/>
            <person name="Bajic V.B."/>
            <person name="Brenner S.E."/>
            <person name="Batalov S."/>
            <person name="Forrest A.R."/>
            <person name="Zavolan M."/>
            <person name="Davis M.J."/>
            <person name="Wilming L.G."/>
            <person name="Aidinis V."/>
            <person name="Allen J.E."/>
            <person name="Ambesi-Impiombato A."/>
            <person name="Apweiler R."/>
            <person name="Aturaliya R.N."/>
            <person name="Bailey T.L."/>
            <person name="Bansal M."/>
            <person name="Baxter L."/>
            <person name="Beisel K.W."/>
            <person name="Bersano T."/>
            <person name="Bono H."/>
            <person name="Chalk A.M."/>
            <person name="Chiu K.P."/>
            <person name="Choudhary V."/>
            <person name="Christoffels A."/>
            <person name="Clutterbuck D.R."/>
            <person name="Crowe M.L."/>
            <person name="Dalla E."/>
            <person name="Dalrymple B.P."/>
            <person name="de Bono B."/>
            <person name="Della Gatta G."/>
            <person name="di Bernardo D."/>
            <person name="Down T."/>
            <person name="Engstrom P."/>
            <person name="Fagiolini M."/>
            <person name="Faulkner G."/>
            <person name="Fletcher C.F."/>
            <person name="Fukushima T."/>
            <person name="Furuno M."/>
            <person name="Futaki S."/>
            <person name="Gariboldi M."/>
            <person name="Georgii-Hemming P."/>
            <person name="Gingeras T.R."/>
            <person name="Gojobori T."/>
            <person name="Green R.E."/>
            <person name="Gustincich S."/>
            <person name="Harbers M."/>
            <person name="Hayashi Y."/>
            <person name="Hensch T.K."/>
            <person name="Hirokawa N."/>
            <person name="Hill D."/>
            <person name="Huminiecki L."/>
            <person name="Iacono M."/>
            <person name="Ikeo K."/>
            <person name="Iwama A."/>
            <person name="Ishikawa T."/>
            <person name="Jakt M."/>
            <person name="Kanapin A."/>
            <person name="Katoh M."/>
            <person name="Kawasawa Y."/>
            <person name="Kelso J."/>
            <person name="Kitamura H."/>
            <person name="Kitano H."/>
            <person name="Kollias G."/>
            <person name="Krishnan S.P."/>
            <person name="Kruger A."/>
            <person name="Kummerfeld S.K."/>
            <person name="Kurochkin I.V."/>
            <person name="Lareau L.F."/>
            <person name="Lazarevic D."/>
            <person name="Lipovich L."/>
            <person name="Liu J."/>
            <person name="Liuni S."/>
            <person name="McWilliam S."/>
            <person name="Madan Babu M."/>
            <person name="Madera M."/>
            <person name="Marchionni L."/>
            <person name="Matsuda H."/>
            <person name="Matsuzawa S."/>
            <person name="Miki H."/>
            <person name="Mignone F."/>
            <person name="Miyake S."/>
            <person name="Morris K."/>
            <person name="Mottagui-Tabar S."/>
            <person name="Mulder N."/>
            <person name="Nakano N."/>
            <person name="Nakauchi H."/>
            <person name="Ng P."/>
            <person name="Nilsson R."/>
            <person name="Nishiguchi S."/>
            <person name="Nishikawa S."/>
            <person name="Nori F."/>
            <person name="Ohara O."/>
            <person name="Okazaki Y."/>
            <person name="Orlando V."/>
            <person name="Pang K.C."/>
            <person name="Pavan W.J."/>
            <person name="Pavesi G."/>
            <person name="Pesole G."/>
            <person name="Petrovsky N."/>
            <person name="Piazza S."/>
            <person name="Reed J."/>
            <person name="Reid J.F."/>
            <person name="Ring B.Z."/>
            <person name="Ringwald M."/>
            <person name="Rost B."/>
            <person name="Ruan Y."/>
            <person name="Salzberg S.L."/>
            <person name="Sandelin A."/>
            <person name="Schneider C."/>
            <person name="Schoenbach C."/>
            <person name="Sekiguchi K."/>
            <person name="Semple C.A."/>
            <person name="Seno S."/>
            <person name="Sessa L."/>
            <person name="Sheng Y."/>
            <person name="Shibata Y."/>
            <person name="Shimada H."/>
            <person name="Shimada K."/>
            <person name="Silva D."/>
            <person name="Sinclair B."/>
            <person name="Sperling S."/>
            <person name="Stupka E."/>
            <person name="Sugiura K."/>
            <person name="Sultana R."/>
            <person name="Takenaka Y."/>
            <person name="Taki K."/>
            <person name="Tammoja K."/>
            <person name="Tan S.L."/>
            <person name="Tang S."/>
            <person name="Taylor M.S."/>
            <person name="Tegner J."/>
            <person name="Teichmann S.A."/>
            <person name="Ueda H.R."/>
            <person name="van Nimwegen E."/>
            <person name="Verardo R."/>
            <person name="Wei C.L."/>
            <person name="Yagi K."/>
            <person name="Yamanishi H."/>
            <person name="Zabarovsky E."/>
            <person name="Zhu S."/>
            <person name="Zimmer A."/>
            <person name="Hide W."/>
            <person name="Bult C."/>
            <person name="Grimmond S.M."/>
            <person name="Teasdale R.D."/>
            <person name="Liu E.T."/>
            <person name="Brusic V."/>
            <person name="Quackenbush J."/>
            <person name="Wahlestedt C."/>
            <person name="Mattick J.S."/>
            <person name="Hume D.A."/>
            <person name="Kai C."/>
            <person name="Sasaki D."/>
            <person name="Tomaru Y."/>
            <person name="Fukuda S."/>
            <person name="Kanamori-Katayama M."/>
            <person name="Suzuki M."/>
            <person name="Aoki J."/>
            <person name="Arakawa T."/>
            <person name="Iida J."/>
            <person name="Imamura K."/>
            <person name="Itoh M."/>
            <person name="Kato T."/>
            <person name="Kawaji H."/>
            <person name="Kawagashira N."/>
            <person name="Kawashima T."/>
            <person name="Kojima M."/>
            <person name="Kondo S."/>
            <person name="Konno H."/>
            <person name="Nakano K."/>
            <person name="Ninomiya N."/>
            <person name="Nishio T."/>
            <person name="Okada M."/>
            <person name="Plessy C."/>
            <person name="Shibata K."/>
            <person name="Shiraki T."/>
            <person name="Suzuki S."/>
            <person name="Tagami M."/>
            <person name="Waki K."/>
            <person name="Watahiki A."/>
            <person name="Okamura-Oho Y."/>
            <person name="Suzuki H."/>
            <person name="Kawai J."/>
            <person name="Hayashizaki Y."/>
        </authorList>
    </citation>
    <scope>NUCLEOTIDE SEQUENCE [LARGE SCALE MRNA]</scope>
    <source>
        <strain>C57BL/6J</strain>
        <tissue>Liver</tissue>
    </source>
</reference>
<reference key="2">
    <citation type="journal article" date="2009" name="PLoS Biol.">
        <title>Lineage-specific biology revealed by a finished genome assembly of the mouse.</title>
        <authorList>
            <person name="Church D.M."/>
            <person name="Goodstadt L."/>
            <person name="Hillier L.W."/>
            <person name="Zody M.C."/>
            <person name="Goldstein S."/>
            <person name="She X."/>
            <person name="Bult C.J."/>
            <person name="Agarwala R."/>
            <person name="Cherry J.L."/>
            <person name="DiCuccio M."/>
            <person name="Hlavina W."/>
            <person name="Kapustin Y."/>
            <person name="Meric P."/>
            <person name="Maglott D."/>
            <person name="Birtle Z."/>
            <person name="Marques A.C."/>
            <person name="Graves T."/>
            <person name="Zhou S."/>
            <person name="Teague B."/>
            <person name="Potamousis K."/>
            <person name="Churas C."/>
            <person name="Place M."/>
            <person name="Herschleb J."/>
            <person name="Runnheim R."/>
            <person name="Forrest D."/>
            <person name="Amos-Landgraf J."/>
            <person name="Schwartz D.C."/>
            <person name="Cheng Z."/>
            <person name="Lindblad-Toh K."/>
            <person name="Eichler E.E."/>
            <person name="Ponting C.P."/>
        </authorList>
    </citation>
    <scope>NUCLEOTIDE SEQUENCE [LARGE SCALE GENOMIC DNA]</scope>
    <source>
        <strain>C57BL/6J</strain>
    </source>
</reference>
<keyword id="KW-0158">Chromosome</keyword>
<keyword id="KW-0227">DNA damage</keyword>
<keyword id="KW-0234">DNA repair</keyword>
<keyword id="KW-1185">Reference proteome</keyword>
<comment type="function">
    <text evidence="1">Component of the shieldin complex, which plays an important role in repair of DNA double-stranded breaks (DSBs). During G1 and S phase of the cell cycle, the complex functions downstream of TP53BP1 to promote non-homologous end joining (NHEJ) and suppress DNA end resection. Mediates various NHEJ-dependent processes including immunoglobulin class-switch recombination, and fusion of unprotected telomeres.</text>
</comment>
<comment type="subunit">
    <text evidence="1">Component of the shieldin complex, consisting of SHLD1, SHLD2, SHLD3 and MAD2L2/REV7. Within the complex, SHLD2 forms a scaffold which interacts with a SHLD3-MAD2L2 subcomplex via its N-terminus, and with SHLD1 via its C-terminus. Interacts with TP53BP1. Interacts with RIF1. Interacts with ASTE1.</text>
</comment>
<comment type="subcellular location">
    <subcellularLocation>
        <location evidence="1">Chromosome</location>
    </subcellularLocation>
</comment>
<comment type="similarity">
    <text evidence="3">Belongs to the SHLD2 family.</text>
</comment>
<accession>Q3UEN2</accession>
<accession>E9Q8K3</accession>
<protein>
    <recommendedName>
        <fullName evidence="3">Shieldin complex subunit 2</fullName>
    </recommendedName>
    <alternativeName>
        <fullName evidence="3">Protein FAM35A</fullName>
    </alternativeName>
    <alternativeName>
        <fullName>RINN1-REV7-interacting novel NHEJ regulator 2</fullName>
    </alternativeName>
</protein>
<organism>
    <name type="scientific">Mus musculus</name>
    <name type="common">Mouse</name>
    <dbReference type="NCBI Taxonomy" id="10090"/>
    <lineage>
        <taxon>Eukaryota</taxon>
        <taxon>Metazoa</taxon>
        <taxon>Chordata</taxon>
        <taxon>Craniata</taxon>
        <taxon>Vertebrata</taxon>
        <taxon>Euteleostomi</taxon>
        <taxon>Mammalia</taxon>
        <taxon>Eutheria</taxon>
        <taxon>Euarchontoglires</taxon>
        <taxon>Glires</taxon>
        <taxon>Rodentia</taxon>
        <taxon>Myomorpha</taxon>
        <taxon>Muroidea</taxon>
        <taxon>Muridae</taxon>
        <taxon>Murinae</taxon>
        <taxon>Mus</taxon>
        <taxon>Mus</taxon>
    </lineage>
</organism>
<name>SHLD2_MOUSE</name>
<evidence type="ECO:0000250" key="1">
    <source>
        <dbReference type="UniProtKB" id="Q86V20"/>
    </source>
</evidence>
<evidence type="ECO:0000256" key="2">
    <source>
        <dbReference type="SAM" id="MobiDB-lite"/>
    </source>
</evidence>
<evidence type="ECO:0000305" key="3"/>
<evidence type="ECO:0000312" key="4">
    <source>
        <dbReference type="MGI" id="MGI:1922948"/>
    </source>
</evidence>